<dbReference type="EC" id="2.1.1.-" evidence="1"/>
<dbReference type="EMBL" id="AE009441">
    <property type="protein sequence ID" value="AAL64767.1"/>
    <property type="molecule type" value="Genomic_DNA"/>
</dbReference>
<dbReference type="RefSeq" id="WP_011009235.1">
    <property type="nucleotide sequence ID" value="NC_003364.1"/>
</dbReference>
<dbReference type="SMR" id="Q8ZTJ4"/>
<dbReference type="FunCoup" id="Q8ZTJ4">
    <property type="interactions" value="3"/>
</dbReference>
<dbReference type="STRING" id="178306.PAE3221"/>
<dbReference type="EnsemblBacteria" id="AAL64767">
    <property type="protein sequence ID" value="AAL64767"/>
    <property type="gene ID" value="PAE3221"/>
</dbReference>
<dbReference type="GeneID" id="1463950"/>
<dbReference type="KEGG" id="pai:PAE3221"/>
<dbReference type="PATRIC" id="fig|178306.9.peg.2426"/>
<dbReference type="eggNOG" id="arCOG04131">
    <property type="taxonomic scope" value="Archaea"/>
</dbReference>
<dbReference type="HOGENOM" id="CLU_041220_0_2_2"/>
<dbReference type="InParanoid" id="Q8ZTJ4"/>
<dbReference type="Proteomes" id="UP000002439">
    <property type="component" value="Chromosome"/>
</dbReference>
<dbReference type="GO" id="GO:0005737">
    <property type="term" value="C:cytoplasm"/>
    <property type="evidence" value="ECO:0007669"/>
    <property type="project" value="UniProtKB-SubCell"/>
</dbReference>
<dbReference type="GO" id="GO:0003723">
    <property type="term" value="F:RNA binding"/>
    <property type="evidence" value="ECO:0007669"/>
    <property type="project" value="UniProtKB-KW"/>
</dbReference>
<dbReference type="GO" id="GO:0000179">
    <property type="term" value="F:rRNA (adenine-N6,N6-)-dimethyltransferase activity"/>
    <property type="evidence" value="ECO:0000318"/>
    <property type="project" value="GO_Central"/>
</dbReference>
<dbReference type="GO" id="GO:0031167">
    <property type="term" value="P:rRNA methylation"/>
    <property type="evidence" value="ECO:0000318"/>
    <property type="project" value="GO_Central"/>
</dbReference>
<dbReference type="CDD" id="cd02440">
    <property type="entry name" value="AdoMet_MTases"/>
    <property type="match status" value="1"/>
</dbReference>
<dbReference type="Gene3D" id="3.40.50.150">
    <property type="entry name" value="Vaccinia Virus protein VP39"/>
    <property type="match status" value="1"/>
</dbReference>
<dbReference type="HAMAP" id="MF_00607">
    <property type="entry name" value="16SrRNA_methyltr_A"/>
    <property type="match status" value="1"/>
</dbReference>
<dbReference type="InterPro" id="IPR001737">
    <property type="entry name" value="KsgA/Erm"/>
</dbReference>
<dbReference type="InterPro" id="IPR020596">
    <property type="entry name" value="rRNA_Ade_Mease_Trfase_CS"/>
</dbReference>
<dbReference type="InterPro" id="IPR020598">
    <property type="entry name" value="rRNA_Ade_methylase_Trfase_N"/>
</dbReference>
<dbReference type="InterPro" id="IPR011530">
    <property type="entry name" value="rRNA_adenine_dimethylase"/>
</dbReference>
<dbReference type="InterPro" id="IPR029063">
    <property type="entry name" value="SAM-dependent_MTases_sf"/>
</dbReference>
<dbReference type="NCBIfam" id="TIGR00755">
    <property type="entry name" value="ksgA"/>
    <property type="match status" value="1"/>
</dbReference>
<dbReference type="PANTHER" id="PTHR11727">
    <property type="entry name" value="DIMETHYLADENOSINE TRANSFERASE"/>
    <property type="match status" value="1"/>
</dbReference>
<dbReference type="PANTHER" id="PTHR11727:SF7">
    <property type="entry name" value="DIMETHYLADENOSINE TRANSFERASE-RELATED"/>
    <property type="match status" value="1"/>
</dbReference>
<dbReference type="Pfam" id="PF00398">
    <property type="entry name" value="RrnaAD"/>
    <property type="match status" value="1"/>
</dbReference>
<dbReference type="SMART" id="SM00650">
    <property type="entry name" value="rADc"/>
    <property type="match status" value="1"/>
</dbReference>
<dbReference type="SUPFAM" id="SSF53335">
    <property type="entry name" value="S-adenosyl-L-methionine-dependent methyltransferases"/>
    <property type="match status" value="1"/>
</dbReference>
<dbReference type="PROSITE" id="PS01131">
    <property type="entry name" value="RRNA_A_DIMETH"/>
    <property type="match status" value="1"/>
</dbReference>
<dbReference type="PROSITE" id="PS51689">
    <property type="entry name" value="SAM_RNA_A_N6_MT"/>
    <property type="match status" value="1"/>
</dbReference>
<gene>
    <name evidence="1" type="primary">rsmA</name>
    <name evidence="1" type="synonym">ksgA</name>
    <name type="ordered locus">PAE3221</name>
</gene>
<name>RSMA_PYRAE</name>
<evidence type="ECO:0000255" key="1">
    <source>
        <dbReference type="HAMAP-Rule" id="MF_00607"/>
    </source>
</evidence>
<protein>
    <recommendedName>
        <fullName evidence="1">Probable ribosomal RNA small subunit methyltransferase A</fullName>
        <ecNumber evidence="1">2.1.1.-</ecNumber>
    </recommendedName>
    <alternativeName>
        <fullName evidence="1">16S rRNA dimethyladenosine transferase</fullName>
    </alternativeName>
    <alternativeName>
        <fullName evidence="1">16S rRNA dimethylase</fullName>
    </alternativeName>
    <alternativeName>
        <fullName evidence="1">S-adenosylmethionine-6-N',N'-adenosyl(rRNA) dimethyltransferase</fullName>
    </alternativeName>
</protein>
<reference key="1">
    <citation type="journal article" date="2002" name="Proc. Natl. Acad. Sci. U.S.A.">
        <title>Genome sequence of the hyperthermophilic crenarchaeon Pyrobaculum aerophilum.</title>
        <authorList>
            <person name="Fitz-Gibbon S.T."/>
            <person name="Ladner H."/>
            <person name="Kim U.-J."/>
            <person name="Stetter K.O."/>
            <person name="Simon M.I."/>
            <person name="Miller J.H."/>
        </authorList>
    </citation>
    <scope>NUCLEOTIDE SEQUENCE [LARGE SCALE GENOMIC DNA]</scope>
    <source>
        <strain>ATCC 51768 / DSM 7523 / JCM 9630 / CIP 104966 / NBRC 100827 / IM2</strain>
    </source>
</reference>
<organism>
    <name type="scientific">Pyrobaculum aerophilum (strain ATCC 51768 / DSM 7523 / JCM 9630 / CIP 104966 / NBRC 100827 / IM2)</name>
    <dbReference type="NCBI Taxonomy" id="178306"/>
    <lineage>
        <taxon>Archaea</taxon>
        <taxon>Thermoproteota</taxon>
        <taxon>Thermoprotei</taxon>
        <taxon>Thermoproteales</taxon>
        <taxon>Thermoproteaceae</taxon>
        <taxon>Pyrobaculum</taxon>
    </lineage>
</organism>
<sequence length="228" mass="25838">MKRRRLAQHFLRDPSVAEYIAGLVPSGLDVIEVGPGAGALTIPLAKRSKTVYAIEIDKALAERLRGIAPPNVVIIVGDALEVEWPRADFFVSNVPYSITSPLLFKLIRHRLPAVLTIQREVAERLVARPGSEDYGRLTVAVQCFYDVEILRVLPPYVFDPPPKVYSAVVRLMPKAPCVDNFDEFEKFSAWLFSARRKTLRRLKLADSTKRVYQLTLEELVELFKRHKA</sequence>
<comment type="function">
    <text evidence="1">Specifically dimethylates two adjacent adenosines in the loop of a conserved hairpin near the 3'-end of 16S rRNA in the 30S particle. May play a critical role in biogenesis of 30S subunits.</text>
</comment>
<comment type="subcellular location">
    <subcellularLocation>
        <location evidence="1">Cytoplasm</location>
    </subcellularLocation>
</comment>
<comment type="similarity">
    <text evidence="1">Belongs to the class I-like SAM-binding methyltransferase superfamily. rRNA adenine N(6)-methyltransferase family. RsmA subfamily.</text>
</comment>
<proteinExistence type="inferred from homology"/>
<keyword id="KW-0963">Cytoplasm</keyword>
<keyword id="KW-0489">Methyltransferase</keyword>
<keyword id="KW-1185">Reference proteome</keyword>
<keyword id="KW-0694">RNA-binding</keyword>
<keyword id="KW-0698">rRNA processing</keyword>
<keyword id="KW-0949">S-adenosyl-L-methionine</keyword>
<keyword id="KW-0808">Transferase</keyword>
<feature type="chain" id="PRO_0000101662" description="Probable ribosomal RNA small subunit methyltransferase A">
    <location>
        <begin position="1"/>
        <end position="228"/>
    </location>
</feature>
<feature type="binding site" evidence="1">
    <location>
        <position position="9"/>
    </location>
    <ligand>
        <name>S-adenosyl-L-methionine</name>
        <dbReference type="ChEBI" id="CHEBI:59789"/>
    </ligand>
</feature>
<feature type="binding site" evidence="1">
    <location>
        <position position="11"/>
    </location>
    <ligand>
        <name>S-adenosyl-L-methionine</name>
        <dbReference type="ChEBI" id="CHEBI:59789"/>
    </ligand>
</feature>
<feature type="binding site" evidence="1">
    <location>
        <position position="34"/>
    </location>
    <ligand>
        <name>S-adenosyl-L-methionine</name>
        <dbReference type="ChEBI" id="CHEBI:59789"/>
    </ligand>
</feature>
<feature type="binding site" evidence="1">
    <location>
        <position position="55"/>
    </location>
    <ligand>
        <name>S-adenosyl-L-methionine</name>
        <dbReference type="ChEBI" id="CHEBI:59789"/>
    </ligand>
</feature>
<feature type="binding site" evidence="1">
    <location>
        <position position="78"/>
    </location>
    <ligand>
        <name>S-adenosyl-L-methionine</name>
        <dbReference type="ChEBI" id="CHEBI:59789"/>
    </ligand>
</feature>
<feature type="binding site" evidence="1">
    <location>
        <position position="93"/>
    </location>
    <ligand>
        <name>S-adenosyl-L-methionine</name>
        <dbReference type="ChEBI" id="CHEBI:59789"/>
    </ligand>
</feature>
<accession>Q8ZTJ4</accession>